<evidence type="ECO:0000250" key="1">
    <source>
        <dbReference type="UniProtKB" id="P15390"/>
    </source>
</evidence>
<evidence type="ECO:0000250" key="2">
    <source>
        <dbReference type="UniProtKB" id="P35499"/>
    </source>
</evidence>
<evidence type="ECO:0000255" key="3"/>
<evidence type="ECO:0000255" key="4">
    <source>
        <dbReference type="PROSITE-ProRule" id="PRU00116"/>
    </source>
</evidence>
<evidence type="ECO:0000256" key="5">
    <source>
        <dbReference type="SAM" id="MobiDB-lite"/>
    </source>
</evidence>
<evidence type="ECO:0000269" key="6">
    <source>
    </source>
</evidence>
<evidence type="ECO:0000305" key="7"/>
<accession>Q2XVR3</accession>
<accession>Q20JQ6</accession>
<reference key="1">
    <citation type="journal article" date="2006" name="J. Mol. Evol.">
        <title>Gene duplications and evolution of vertebrate voltage-gated sodium channels.</title>
        <authorList>
            <person name="Novak A.E."/>
            <person name="Jost M.C."/>
            <person name="Lu Y."/>
            <person name="Taylor A.D."/>
            <person name="Zakon H.H."/>
            <person name="Ribera A.B."/>
        </authorList>
    </citation>
    <scope>NUCLEOTIDE SEQUENCE [MRNA]</scope>
    <scope>TISSUE SPECIFICITY</scope>
</reference>
<reference key="2">
    <citation type="journal article" date="2005" name="Curr. Biol.">
        <title>Genetic basis of tetrodotoxin resistance in pufferfishes.</title>
        <authorList>
            <person name="Venkatesh B."/>
            <person name="Lu S.Q."/>
            <person name="Dandona N."/>
            <person name="See S.L."/>
            <person name="Brenner S."/>
            <person name="Soong T.W."/>
        </authorList>
    </citation>
    <scope>NUCLEOTIDE SEQUENCE [GENOMIC DNA]</scope>
</reference>
<gene>
    <name type="primary">scn4aa</name>
    <name type="synonym">nav1.4a</name>
</gene>
<comment type="function">
    <text evidence="2">Pore-forming subunit of a voltage-gated sodium (Nav) channel that directly mediates the depolarizing phase of action potentials in excitable membranes. Navs, also called VGSCs (voltage-gated sodium channels) or VDSCs (voltage-dependent sodium channels), operate by switching between closed and open conformations depending on the voltage difference across the membrane. In the open conformation they allow Na(+) ions to selectively pass through the pore, along their electrochemical gradient. The influx of Na+ ions provokes membrane depolarization, initiating the propagation of electrical signals throughout cells and tissues.</text>
</comment>
<comment type="catalytic activity">
    <reaction evidence="2">
        <text>Na(+)(in) = Na(+)(out)</text>
        <dbReference type="Rhea" id="RHEA:34963"/>
        <dbReference type="ChEBI" id="CHEBI:29101"/>
    </reaction>
</comment>
<comment type="subunit">
    <text evidence="2">Voltage-gated sodium (Nav) channels consist of an ion-conducting alpha subunit which is functional on its own associated with regulatory beta subunits.</text>
</comment>
<comment type="subcellular location">
    <subcellularLocation>
        <location evidence="1">Cell membrane</location>
        <topology evidence="2">Multi-pass membrane protein</topology>
    </subcellularLocation>
</comment>
<comment type="tissue specificity">
    <text evidence="6">Expressed in skeletal muscle, brain, spinal cord, and eye.</text>
</comment>
<comment type="domain">
    <text evidence="2">The sequence contains 4 internal repeats, each with 5 hydrophobic segments (S1, S2, S3, S5, S6) and one positively charged segment (S4). Segments S4 are probably the voltage-sensors and are characterized by a series of positively charged amino acids at every third position.</text>
</comment>
<comment type="similarity">
    <text evidence="7">Belongs to the sodium channel (TC 1.A.1.10) family. Nav1.4/SCN4A subfamily.</text>
</comment>
<feature type="chain" id="PRO_0000371317" description="Sodium channel protein type 4 subunit alpha A">
    <location>
        <begin position="1"/>
        <end position="1829"/>
    </location>
</feature>
<feature type="topological domain" description="Cytoplasmic" evidence="7">
    <location>
        <begin position="1"/>
        <end position="124"/>
    </location>
</feature>
<feature type="transmembrane region" description="Helical; Name=S1 of repeat I" evidence="2">
    <location>
        <begin position="125"/>
        <end position="143"/>
    </location>
</feature>
<feature type="topological domain" description="Extracellular" evidence="7">
    <location>
        <begin position="144"/>
        <end position="150"/>
    </location>
</feature>
<feature type="transmembrane region" description="Helical; Name=S2 of repeat I" evidence="2">
    <location>
        <begin position="151"/>
        <end position="171"/>
    </location>
</feature>
<feature type="topological domain" description="Cytoplasmic" evidence="7">
    <location>
        <begin position="172"/>
        <end position="185"/>
    </location>
</feature>
<feature type="transmembrane region" description="Helical; Name=S3 of repeat I" evidence="2">
    <location>
        <begin position="186"/>
        <end position="203"/>
    </location>
</feature>
<feature type="topological domain" description="Extracellular" evidence="7">
    <location>
        <begin position="204"/>
        <end position="209"/>
    </location>
</feature>
<feature type="transmembrane region" description="Helical; Name=S4 of repeat I" evidence="2">
    <location>
        <begin position="210"/>
        <end position="226"/>
    </location>
</feature>
<feature type="topological domain" description="Cytoplasmic" evidence="7">
    <location>
        <begin position="227"/>
        <end position="245"/>
    </location>
</feature>
<feature type="transmembrane region" description="Helical; Name=S5 of repeat I" evidence="2">
    <location>
        <begin position="246"/>
        <end position="265"/>
    </location>
</feature>
<feature type="topological domain" description="Extracellular" evidence="7">
    <location>
        <begin position="266"/>
        <end position="358"/>
    </location>
</feature>
<feature type="intramembrane region" description="Pore-forming" evidence="2">
    <location>
        <begin position="359"/>
        <end position="383"/>
    </location>
</feature>
<feature type="topological domain" description="Extracellular" evidence="7">
    <location>
        <begin position="384"/>
        <end position="390"/>
    </location>
</feature>
<feature type="transmembrane region" description="Helical; Name=S6 of repeat I" evidence="2">
    <location>
        <begin position="391"/>
        <end position="411"/>
    </location>
</feature>
<feature type="topological domain" description="Cytoplasmic" evidence="7">
    <location>
        <begin position="412"/>
        <end position="582"/>
    </location>
</feature>
<feature type="transmembrane region" description="Helical; Name=S1 of repeat II" evidence="2">
    <location>
        <begin position="583"/>
        <end position="601"/>
    </location>
</feature>
<feature type="topological domain" description="Extracellular" evidence="7">
    <location>
        <begin position="602"/>
        <end position="612"/>
    </location>
</feature>
<feature type="transmembrane region" description="Helical; Name=S2 of repeat II" evidence="2">
    <location>
        <begin position="613"/>
        <end position="632"/>
    </location>
</feature>
<feature type="topological domain" description="Cytoplasmic" evidence="7">
    <location>
        <begin position="633"/>
        <end position="646"/>
    </location>
</feature>
<feature type="transmembrane region" description="Helical; Name=S3 of repeat II" evidence="2">
    <location>
        <begin position="647"/>
        <end position="666"/>
    </location>
</feature>
<feature type="topological domain" description="Extracellular" evidence="7">
    <location>
        <begin position="667"/>
        <end position="668"/>
    </location>
</feature>
<feature type="transmembrane region" description="Helical; Name=S4 of repeat II" evidence="2">
    <location>
        <begin position="669"/>
        <end position="686"/>
    </location>
</feature>
<feature type="topological domain" description="Cytoplasmic" evidence="7">
    <location>
        <begin position="687"/>
        <end position="702"/>
    </location>
</feature>
<feature type="transmembrane region" description="Helical; Name=S5 of repeat II" evidence="2">
    <location>
        <begin position="703"/>
        <end position="721"/>
    </location>
</feature>
<feature type="topological domain" description="Extracellular" evidence="7">
    <location>
        <begin position="722"/>
        <end position="750"/>
    </location>
</feature>
<feature type="intramembrane region" description="Pore-forming" evidence="2">
    <location>
        <begin position="751"/>
        <end position="771"/>
    </location>
</feature>
<feature type="topological domain" description="Extracellular" evidence="7">
    <location>
        <begin position="772"/>
        <end position="782"/>
    </location>
</feature>
<feature type="transmembrane region" description="Helical; Name=S6 of repeat II" evidence="2">
    <location>
        <begin position="783"/>
        <end position="801"/>
    </location>
</feature>
<feature type="topological domain" description="Cytoplasmic" evidence="7">
    <location>
        <begin position="802"/>
        <end position="998"/>
    </location>
</feature>
<feature type="transmembrane region" description="Helical; Name=S1 of repeat III" evidence="2">
    <location>
        <begin position="999"/>
        <end position="1016"/>
    </location>
</feature>
<feature type="topological domain" description="Extracellular" evidence="7">
    <location>
        <begin position="1017"/>
        <end position="1029"/>
    </location>
</feature>
<feature type="transmembrane region" description="Helical; Name=S2 of repeat III" evidence="2">
    <location>
        <begin position="1030"/>
        <end position="1048"/>
    </location>
</feature>
<feature type="topological domain" description="Cytoplasmic" evidence="7">
    <location>
        <begin position="1049"/>
        <end position="1062"/>
    </location>
</feature>
<feature type="transmembrane region" description="Helical; Name=S3 of repeat III" evidence="2">
    <location>
        <begin position="1063"/>
        <end position="1081"/>
    </location>
</feature>
<feature type="topological domain" description="Extracellular" evidence="7">
    <location>
        <begin position="1082"/>
        <end position="1089"/>
    </location>
</feature>
<feature type="transmembrane region" description="Helical; Name=S4 of repeat III" evidence="2">
    <location>
        <begin position="1090"/>
        <end position="1108"/>
    </location>
</feature>
<feature type="topological domain" description="Cytoplasmic" evidence="7">
    <location>
        <begin position="1109"/>
        <end position="1125"/>
    </location>
</feature>
<feature type="transmembrane region" description="Helical; Name=S5 of repeat III" evidence="2">
    <location>
        <begin position="1126"/>
        <end position="1145"/>
    </location>
</feature>
<feature type="topological domain" description="Extracellular" evidence="7">
    <location>
        <begin position="1146"/>
        <end position="1196"/>
    </location>
</feature>
<feature type="intramembrane region" description="Pore-forming" evidence="2">
    <location>
        <begin position="1197"/>
        <end position="1218"/>
    </location>
</feature>
<feature type="topological domain" description="Extracellular" evidence="7">
    <location>
        <begin position="1219"/>
        <end position="1235"/>
    </location>
</feature>
<feature type="transmembrane region" description="Helical; Name=S6 of repeat III" evidence="2">
    <location>
        <begin position="1236"/>
        <end position="1257"/>
    </location>
</feature>
<feature type="topological domain" description="Cytoplasmic" evidence="7">
    <location>
        <begin position="1258"/>
        <end position="1320"/>
    </location>
</feature>
<feature type="transmembrane region" description="Helical; Name=S1 of repeat IV" evidence="2">
    <location>
        <begin position="1321"/>
        <end position="1338"/>
    </location>
</feature>
<feature type="topological domain" description="Extracellular" evidence="7">
    <location>
        <begin position="1339"/>
        <end position="1349"/>
    </location>
</feature>
<feature type="transmembrane region" description="Helical; Name=S2 of repeat IV" evidence="2">
    <location>
        <begin position="1350"/>
        <end position="1368"/>
    </location>
</feature>
<feature type="topological domain" description="Cytoplasmic" evidence="7">
    <location>
        <begin position="1369"/>
        <end position="1380"/>
    </location>
</feature>
<feature type="transmembrane region" description="Helical; Name=S3 of repeat IV" evidence="2">
    <location>
        <begin position="1381"/>
        <end position="1398"/>
    </location>
</feature>
<feature type="topological domain" description="Extracellular" evidence="7">
    <location>
        <begin position="1399"/>
        <end position="1411"/>
    </location>
</feature>
<feature type="transmembrane region" description="Helical; Name=S4 of repeat IV" evidence="2">
    <location>
        <begin position="1412"/>
        <end position="1428"/>
    </location>
</feature>
<feature type="topological domain" description="Cytoplasmic" evidence="7">
    <location>
        <begin position="1429"/>
        <end position="1447"/>
    </location>
</feature>
<feature type="transmembrane region" description="Helical; Name=S5 of repeat IV" evidence="2">
    <location>
        <begin position="1448"/>
        <end position="1465"/>
    </location>
</feature>
<feature type="topological domain" description="Extracellular" evidence="7">
    <location>
        <begin position="1466"/>
        <end position="1487"/>
    </location>
</feature>
<feature type="intramembrane region" description="Pore-forming" evidence="2">
    <location>
        <begin position="1488"/>
        <end position="1510"/>
    </location>
</feature>
<feature type="topological domain" description="Extracellular" evidence="7">
    <location>
        <begin position="1511"/>
        <end position="1540"/>
    </location>
</feature>
<feature type="transmembrane region" description="Helical; Name=S6 of repeat IV" evidence="2">
    <location>
        <begin position="1541"/>
        <end position="1563"/>
    </location>
</feature>
<feature type="topological domain" description="Cytoplasmic" evidence="7">
    <location>
        <begin position="1564"/>
        <end position="1829"/>
    </location>
</feature>
<feature type="repeat" description="I" evidence="7">
    <location>
        <begin position="106"/>
        <end position="421"/>
    </location>
</feature>
<feature type="repeat" description="II" evidence="7">
    <location>
        <begin position="564"/>
        <end position="836"/>
    </location>
</feature>
<feature type="repeat" description="III" evidence="7">
    <location>
        <begin position="979"/>
        <end position="1292"/>
    </location>
</feature>
<feature type="repeat" description="IV" evidence="7">
    <location>
        <begin position="1301"/>
        <end position="1599"/>
    </location>
</feature>
<feature type="domain" description="IQ" evidence="4">
    <location>
        <begin position="1693"/>
        <end position="1722"/>
    </location>
</feature>
<feature type="region of interest" description="Disordered" evidence="5">
    <location>
        <begin position="32"/>
        <end position="52"/>
    </location>
</feature>
<feature type="region of interest" description="Disordered" evidence="5">
    <location>
        <begin position="446"/>
        <end position="468"/>
    </location>
</feature>
<feature type="region of interest" description="Disordered" evidence="5">
    <location>
        <begin position="901"/>
        <end position="957"/>
    </location>
</feature>
<feature type="region of interest" description="Important for rapid channel inactivation" evidence="1">
    <location>
        <begin position="1276"/>
        <end position="1278"/>
    </location>
</feature>
<feature type="region of interest" description="Disordered" evidence="5">
    <location>
        <begin position="1765"/>
        <end position="1786"/>
    </location>
</feature>
<feature type="compositionally biased region" description="Polar residues" evidence="5">
    <location>
        <begin position="446"/>
        <end position="467"/>
    </location>
</feature>
<feature type="compositionally biased region" description="Acidic residues" evidence="5">
    <location>
        <begin position="902"/>
        <end position="916"/>
    </location>
</feature>
<feature type="compositionally biased region" description="Polar residues" evidence="5">
    <location>
        <begin position="923"/>
        <end position="933"/>
    </location>
</feature>
<feature type="compositionally biased region" description="Acidic residues" evidence="5">
    <location>
        <begin position="939"/>
        <end position="957"/>
    </location>
</feature>
<feature type="glycosylation site" description="N-linked (GlcNAc...) asparagine" evidence="3">
    <location>
        <position position="207"/>
    </location>
</feature>
<feature type="glycosylation site" description="N-linked (GlcNAc...) asparagine" evidence="3">
    <location>
        <position position="280"/>
    </location>
</feature>
<feature type="glycosylation site" description="N-linked (GlcNAc...) asparagine" evidence="3">
    <location>
        <position position="293"/>
    </location>
</feature>
<feature type="glycosylation site" description="N-linked (GlcNAc...) asparagine" evidence="3">
    <location>
        <position position="329"/>
    </location>
</feature>
<feature type="glycosylation site" description="N-linked (GlcNAc...) asparagine" evidence="3">
    <location>
        <position position="1157"/>
    </location>
</feature>
<feature type="glycosylation site" description="N-linked (GlcNAc...) asparagine" evidence="3">
    <location>
        <position position="1171"/>
    </location>
</feature>
<feature type="disulfide bond" evidence="2">
    <location>
        <begin position="273"/>
        <end position="327"/>
    </location>
</feature>
<feature type="disulfide bond" evidence="2">
    <location>
        <begin position="336"/>
        <end position="342"/>
    </location>
</feature>
<feature type="disulfide bond" evidence="2">
    <location>
        <begin position="735"/>
        <end position="741"/>
    </location>
</feature>
<feature type="disulfide bond" evidence="2">
    <location>
        <begin position="773"/>
        <end position="782"/>
    </location>
</feature>
<feature type="disulfide bond" evidence="2">
    <location>
        <begin position="1155"/>
        <end position="1175"/>
    </location>
</feature>
<feature type="disulfide bond" evidence="2">
    <location>
        <begin position="1519"/>
        <end position="1534"/>
    </location>
</feature>
<feature type="sequence conflict" description="In Ref. 1; ABA54921." evidence="7" ref="1">
    <original>N</original>
    <variation>S</variation>
    <location>
        <position position="310"/>
    </location>
</feature>
<feature type="sequence conflict" description="In Ref. 1; ABA54921." evidence="7" ref="1">
    <location>
        <position position="1054"/>
    </location>
</feature>
<feature type="sequence conflict" description="In Ref. 1; ABA54921." evidence="7" ref="1">
    <location>
        <position position="1305"/>
    </location>
</feature>
<feature type="sequence conflict" description="In Ref. 1; ABA54921." evidence="7" ref="1">
    <original>R</original>
    <variation>Q</variation>
    <location>
        <position position="1721"/>
    </location>
</feature>
<feature type="sequence conflict" description="In Ref. 1; ABA54921." evidence="7" ref="1">
    <original>I</original>
    <variation>T</variation>
    <location>
        <position position="1811"/>
    </location>
</feature>
<feature type="sequence conflict" description="In Ref. 1; ABA54921." evidence="7" ref="1">
    <original>L</original>
    <variation>F</variation>
    <location>
        <position position="1815"/>
    </location>
</feature>
<dbReference type="EMBL" id="DQ149506">
    <property type="protein sequence ID" value="ABA54921.1"/>
    <property type="molecule type" value="mRNA"/>
</dbReference>
<dbReference type="EMBL" id="DQ221253">
    <property type="protein sequence ID" value="ABB29445.2"/>
    <property type="molecule type" value="Genomic_DNA"/>
</dbReference>
<dbReference type="RefSeq" id="NP_001034914.1">
    <property type="nucleotide sequence ID" value="NM_001039825.1"/>
</dbReference>
<dbReference type="SMR" id="Q2XVR3"/>
<dbReference type="FunCoup" id="Q2XVR3">
    <property type="interactions" value="815"/>
</dbReference>
<dbReference type="STRING" id="7955.ENSDARP00000134593"/>
<dbReference type="GlyCosmos" id="Q2XVR3">
    <property type="glycosylation" value="6 sites, No reported glycans"/>
</dbReference>
<dbReference type="PaxDb" id="7955-ENSDARP00000097312"/>
<dbReference type="GeneID" id="572442"/>
<dbReference type="KEGG" id="dre:572442"/>
<dbReference type="AGR" id="ZFIN:ZDB-GENE-051201-2"/>
<dbReference type="CTD" id="572442"/>
<dbReference type="ZFIN" id="ZDB-GENE-051201-2">
    <property type="gene designation" value="scn4aa"/>
</dbReference>
<dbReference type="eggNOG" id="KOG2301">
    <property type="taxonomic scope" value="Eukaryota"/>
</dbReference>
<dbReference type="InParanoid" id="Q2XVR3"/>
<dbReference type="OrthoDB" id="2984333at2759"/>
<dbReference type="PhylomeDB" id="Q2XVR3"/>
<dbReference type="PRO" id="PR:Q2XVR3"/>
<dbReference type="Proteomes" id="UP000000437">
    <property type="component" value="Alternate scaffold 12"/>
</dbReference>
<dbReference type="Proteomes" id="UP000000437">
    <property type="component" value="Chromosome 12"/>
</dbReference>
<dbReference type="GO" id="GO:0030424">
    <property type="term" value="C:axon"/>
    <property type="evidence" value="ECO:0000318"/>
    <property type="project" value="GO_Central"/>
</dbReference>
<dbReference type="GO" id="GO:0001518">
    <property type="term" value="C:voltage-gated sodium channel complex"/>
    <property type="evidence" value="ECO:0000318"/>
    <property type="project" value="GO_Central"/>
</dbReference>
<dbReference type="GO" id="GO:0005248">
    <property type="term" value="F:voltage-gated sodium channel activity"/>
    <property type="evidence" value="ECO:0000318"/>
    <property type="project" value="GO_Central"/>
</dbReference>
<dbReference type="GO" id="GO:0086010">
    <property type="term" value="P:membrane depolarization during action potential"/>
    <property type="evidence" value="ECO:0000318"/>
    <property type="project" value="GO_Central"/>
</dbReference>
<dbReference type="GO" id="GO:0019228">
    <property type="term" value="P:neuronal action potential"/>
    <property type="evidence" value="ECO:0000318"/>
    <property type="project" value="GO_Central"/>
</dbReference>
<dbReference type="CDD" id="cd13433">
    <property type="entry name" value="Na_channel_gate"/>
    <property type="match status" value="1"/>
</dbReference>
<dbReference type="FunFam" id="1.10.238.10:FF:000002">
    <property type="entry name" value="Sodium channel protein"/>
    <property type="match status" value="1"/>
</dbReference>
<dbReference type="FunFam" id="1.10.287.70:FF:000001">
    <property type="entry name" value="Sodium channel protein"/>
    <property type="match status" value="1"/>
</dbReference>
<dbReference type="FunFam" id="1.10.287.70:FF:000006">
    <property type="entry name" value="Sodium channel protein"/>
    <property type="match status" value="1"/>
</dbReference>
<dbReference type="FunFam" id="1.20.120.350:FF:000002">
    <property type="entry name" value="Sodium channel protein"/>
    <property type="match status" value="1"/>
</dbReference>
<dbReference type="FunFam" id="1.20.120.350:FF:000004">
    <property type="entry name" value="Sodium channel protein"/>
    <property type="match status" value="1"/>
</dbReference>
<dbReference type="FunFam" id="1.20.120.350:FF:000005">
    <property type="entry name" value="Sodium channel protein"/>
    <property type="match status" value="1"/>
</dbReference>
<dbReference type="FunFam" id="1.20.120.350:FF:000003">
    <property type="entry name" value="Voltage-dependent sodium channel"/>
    <property type="match status" value="1"/>
</dbReference>
<dbReference type="Gene3D" id="1.10.287.70">
    <property type="match status" value="4"/>
</dbReference>
<dbReference type="Gene3D" id="1.10.238.10">
    <property type="entry name" value="EF-hand"/>
    <property type="match status" value="1"/>
</dbReference>
<dbReference type="Gene3D" id="1.20.5.1190">
    <property type="entry name" value="iswi atpase"/>
    <property type="match status" value="1"/>
</dbReference>
<dbReference type="Gene3D" id="1.20.120.350">
    <property type="entry name" value="Voltage-gated potassium channels. Chain C"/>
    <property type="match status" value="4"/>
</dbReference>
<dbReference type="InterPro" id="IPR005821">
    <property type="entry name" value="Ion_trans_dom"/>
</dbReference>
<dbReference type="InterPro" id="IPR001696">
    <property type="entry name" value="Na_channel_asu"/>
</dbReference>
<dbReference type="InterPro" id="IPR044564">
    <property type="entry name" value="Na_chnl_inactivation_gate"/>
</dbReference>
<dbReference type="InterPro" id="IPR010526">
    <property type="entry name" value="Na_trans_assoc_dom"/>
</dbReference>
<dbReference type="InterPro" id="IPR043203">
    <property type="entry name" value="VGCC_Ca_Na"/>
</dbReference>
<dbReference type="InterPro" id="IPR027359">
    <property type="entry name" value="Volt_channel_dom_sf"/>
</dbReference>
<dbReference type="PANTHER" id="PTHR10037:SF223">
    <property type="entry name" value="SODIUM CHANNEL PROTEIN TYPE 4 SUBUNIT ALPHA"/>
    <property type="match status" value="1"/>
</dbReference>
<dbReference type="PANTHER" id="PTHR10037">
    <property type="entry name" value="VOLTAGE-GATED CATION CHANNEL CALCIUM AND SODIUM"/>
    <property type="match status" value="1"/>
</dbReference>
<dbReference type="Pfam" id="PF00520">
    <property type="entry name" value="Ion_trans"/>
    <property type="match status" value="4"/>
</dbReference>
<dbReference type="Pfam" id="PF24609">
    <property type="entry name" value="IQ_SCN5A_C"/>
    <property type="match status" value="1"/>
</dbReference>
<dbReference type="Pfam" id="PF06512">
    <property type="entry name" value="Na_trans_assoc"/>
    <property type="match status" value="1"/>
</dbReference>
<dbReference type="PRINTS" id="PR00170">
    <property type="entry name" value="NACHANNEL"/>
</dbReference>
<dbReference type="SUPFAM" id="SSF81324">
    <property type="entry name" value="Voltage-gated potassium channels"/>
    <property type="match status" value="4"/>
</dbReference>
<dbReference type="PROSITE" id="PS50096">
    <property type="entry name" value="IQ"/>
    <property type="match status" value="1"/>
</dbReference>
<organism>
    <name type="scientific">Danio rerio</name>
    <name type="common">Zebrafish</name>
    <name type="synonym">Brachydanio rerio</name>
    <dbReference type="NCBI Taxonomy" id="7955"/>
    <lineage>
        <taxon>Eukaryota</taxon>
        <taxon>Metazoa</taxon>
        <taxon>Chordata</taxon>
        <taxon>Craniata</taxon>
        <taxon>Vertebrata</taxon>
        <taxon>Euteleostomi</taxon>
        <taxon>Actinopterygii</taxon>
        <taxon>Neopterygii</taxon>
        <taxon>Teleostei</taxon>
        <taxon>Ostariophysi</taxon>
        <taxon>Cypriniformes</taxon>
        <taxon>Danionidae</taxon>
        <taxon>Danioninae</taxon>
        <taxon>Danio</taxon>
    </lineage>
</organism>
<name>SC4AA_DANRE</name>
<keyword id="KW-1003">Cell membrane</keyword>
<keyword id="KW-1015">Disulfide bond</keyword>
<keyword id="KW-0325">Glycoprotein</keyword>
<keyword id="KW-0407">Ion channel</keyword>
<keyword id="KW-0406">Ion transport</keyword>
<keyword id="KW-0472">Membrane</keyword>
<keyword id="KW-1185">Reference proteome</keyword>
<keyword id="KW-0677">Repeat</keyword>
<keyword id="KW-0915">Sodium</keyword>
<keyword id="KW-0894">Sodium channel</keyword>
<keyword id="KW-0739">Sodium transport</keyword>
<keyword id="KW-0812">Transmembrane</keyword>
<keyword id="KW-1133">Transmembrane helix</keyword>
<keyword id="KW-0813">Transport</keyword>
<keyword id="KW-0851">Voltage-gated channel</keyword>
<protein>
    <recommendedName>
        <fullName>Sodium channel protein type 4 subunit alpha A</fullName>
    </recommendedName>
    <alternativeName>
        <fullName>Voltage-gated sodium channel subunit alpha Nav1.4a</fullName>
    </alternativeName>
</protein>
<proteinExistence type="evidence at transcript level"/>
<sequence>MARLLPPTGTSVFRRFTPESLVEIERLIQEKSTREELEGAEEEPQAPSSDLEAGKCLPMIYGDPPGDLLNTPLEDIDPFYKTQKTFIVISKGNTIFRFSSEPAMFCISPFSIVRRGAIKILIHSLFSMFIMITILSNCVFMTMSNPPAWSKTVEYVFTGIYTFEATVKVLSRGFCIGPFTFLRDPWNWLDFMVISMAYVTEFVDLGNVSALRTFRVLRALKTITVIPGLKTIVGALIQSVKKMIDVMILTIFALAVFALIGLQLFMGNLRQKCIRWPILNSTIFDVYNSNMVNDTTLNVTDTFDFKAYINNEENQYFLEGSLDALLCGNSSDAGRCPEGYTCMKAGRNPNYGYTSYDNFGWAFLALFRLMTQDFWENLFQLTLRAAGKTYMIFFVVVIFLGSFYLINLILAVVAMAYDEQNEATLAEARDKEEEFQRLLEQLKNQETGSKASLASQKTQSRGSNRTGSLHDLADEDVIKDCNGRIVPRLIVNRVSSNKELSAEEDQKSLSSKHSMQYLDQPKLSKRTASALSVLTATMEGLEDAQRPCPPGWYKFADMFLKWDCCAPWILFKKWVHFVVMDPFVDLGITICIVLNTLFMAMEHYPMSPHFEHVLSVGNLVFTGIFTAEMVFKLIAMDPYYYFQVGWNIFDSIIVTLSLVELGLANVQGLSVLRSFRLLRVFKLAKSWPTLNMLIKIIGNSVGALGNLTLVLAIIVFIFAVVGMQLFGKSYKDCVCKISEDCELPRWHMNDFFHSFLIVFRILCGEWIETMWDCMEVAGASMCLIVFMMVMVIGNLVVLNLFLALLLSSFSGDNLSGGDDDGEMNNLQIAIGRITRGIDWVKALVASMVQRILGKKPDNTKEEGEGDIELYALNHLDEGKMADGLTNCLSPTLTVPIARCESDVEEDEDSESSDEEDAKATLNDGDSSVCSTVDYQPPEPEPEPEEVEEEEPEPEEPEACFTEGCIRRCACLSVDITEGWGKKWWNLRRTCFTIVEHDYFETFIIFMILLSSGALAFEDINIERRRVIKTILEYADKVFTYIFIVEMLLKWVAYGFKTYFTNAWCWLDFLIVDVSLVSLTANLMGYSELGAIKSLRTLRALRPLRALSRFEGMRVVVNALVGAIPSIFNVLLVCLIFWLIFSIMGVNLFAGKFYHCINTTTEERIPMDVVNNKSDCMALMYTNEVRWVNVKVNYDNVGLGYLSLLQIATFKGWMDIMYAAVDSREVDEQPSYEINLYMYLYFVIFIIFGSFFTLNLFIGVIIDNFNQQKSKFGGKDIFMTEEQKKYYNAMKKLGAKKRPKPIPRPSNIIQGLVFDFISKQFFDIFIMVLICLNMVTMMIETDDQSAEKEYVLYQINLVFIVVFTSECVLKLFALRQYFFTIGWNVFDFVVVILSIAGLMLSDIIEKYFVSPTLFRVIRLARIGRVLRLIRGAKGIRTLLFALMMSLPALFNIGLLLFLIMFIFSIFGMSNFAYVKKQAGIDDIFNFETFGGSIICLFEITTSAGWDGLLLPILNSGPPDCDPDFENPGTDVRGNCGNPGMGIMFFCSYIIMSFLVVVNMYIAIILENFNNAQEESGDPLCEDDFDMFDETWEKFDVDATQFIEYDRLFDFVDALQEPLRIAKPNRLKLISMDIPIVNGDKIHSQDILLAVTREVLGDTIEMDAMKESIEAKFIMNNPTSASFEPIITTLRRKEEERAAIAVQRIYRRHLLKRAIRYACFMRRSKRKVRNPNDNEPPETEGLIARKMNTLYGSNPELAMALELETRPMRPNSQPPKPSQVTQTRASVTFPRPQGQLILPVELTSEVILRSAPITHSLNSSENATTIKESIV</sequence>